<keyword id="KW-1185">Reference proteome</keyword>
<name>YO097_YEAST</name>
<gene>
    <name type="ordered locus">YOL097W-A</name>
    <name type="ORF">NOL020W</name>
</gene>
<protein>
    <recommendedName>
        <fullName>Uncharacterized protein YOL097W-A</fullName>
    </recommendedName>
</protein>
<sequence length="61" mass="7032">MQSMICSSEHENLTCKYWPVSFLASWCENGSGTLMQKDGSLLYAVKNFSHIFEKKIFHTNL</sequence>
<organism>
    <name type="scientific">Saccharomyces cerevisiae (strain ATCC 204508 / S288c)</name>
    <name type="common">Baker's yeast</name>
    <dbReference type="NCBI Taxonomy" id="559292"/>
    <lineage>
        <taxon>Eukaryota</taxon>
        <taxon>Fungi</taxon>
        <taxon>Dikarya</taxon>
        <taxon>Ascomycota</taxon>
        <taxon>Saccharomycotina</taxon>
        <taxon>Saccharomycetes</taxon>
        <taxon>Saccharomycetales</taxon>
        <taxon>Saccharomycetaceae</taxon>
        <taxon>Saccharomyces</taxon>
    </lineage>
</organism>
<dbReference type="EMBL" id="Z74839">
    <property type="status" value="NOT_ANNOTATED_CDS"/>
    <property type="molecule type" value="Genomic_DNA"/>
</dbReference>
<dbReference type="EMBL" id="BK006948">
    <property type="protein sequence ID" value="DAA10686.1"/>
    <property type="molecule type" value="Genomic_DNA"/>
</dbReference>
<dbReference type="RefSeq" id="NP_878163.1">
    <property type="nucleotide sequence ID" value="NM_001184665.1"/>
</dbReference>
<dbReference type="BioGRID" id="37017">
    <property type="interactions" value="27"/>
</dbReference>
<dbReference type="FunCoup" id="Q3E7Y9">
    <property type="interactions" value="6"/>
</dbReference>
<dbReference type="STRING" id="4932.YOL097W-A"/>
<dbReference type="PaxDb" id="4932-YOL097W-A"/>
<dbReference type="EnsemblFungi" id="YOL097W-A_mRNA">
    <property type="protein sequence ID" value="YOL097W-A"/>
    <property type="gene ID" value="YOL097W-A"/>
</dbReference>
<dbReference type="GeneID" id="1466475"/>
<dbReference type="KEGG" id="sce:YOL097W-A"/>
<dbReference type="AGR" id="SGD:S000028854"/>
<dbReference type="SGD" id="S000028854">
    <property type="gene designation" value="YOL097W-A"/>
</dbReference>
<dbReference type="VEuPathDB" id="FungiDB:YOL097W-A"/>
<dbReference type="HOGENOM" id="CLU_2924480_0_0_1"/>
<dbReference type="InParanoid" id="Q3E7Y9"/>
<dbReference type="BioCyc" id="YEAST:G3O-33912-MONOMER"/>
<dbReference type="BioGRID-ORCS" id="1466475">
    <property type="hits" value="3 hits in 10 CRISPR screens"/>
</dbReference>
<dbReference type="PRO" id="PR:Q3E7Y9"/>
<dbReference type="Proteomes" id="UP000002311">
    <property type="component" value="Chromosome XV"/>
</dbReference>
<dbReference type="RNAct" id="Q3E7Y9">
    <property type="molecule type" value="protein"/>
</dbReference>
<feature type="chain" id="PRO_0000235930" description="Uncharacterized protein YOL097W-A">
    <location>
        <begin position="1"/>
        <end position="61"/>
    </location>
</feature>
<accession>Q3E7Y9</accession>
<accession>D6W1X0</accession>
<reference key="1">
    <citation type="journal article" date="1997" name="Nature">
        <title>The nucleotide sequence of Saccharomyces cerevisiae chromosome XV.</title>
        <authorList>
            <person name="Dujon B."/>
            <person name="Albermann K."/>
            <person name="Aldea M."/>
            <person name="Alexandraki D."/>
            <person name="Ansorge W."/>
            <person name="Arino J."/>
            <person name="Benes V."/>
            <person name="Bohn C."/>
            <person name="Bolotin-Fukuhara M."/>
            <person name="Bordonne R."/>
            <person name="Boyer J."/>
            <person name="Camasses A."/>
            <person name="Casamayor A."/>
            <person name="Casas C."/>
            <person name="Cheret G."/>
            <person name="Cziepluch C."/>
            <person name="Daignan-Fornier B."/>
            <person name="Dang V.-D."/>
            <person name="de Haan M."/>
            <person name="Delius H."/>
            <person name="Durand P."/>
            <person name="Fairhead C."/>
            <person name="Feldmann H."/>
            <person name="Gaillon L."/>
            <person name="Galisson F."/>
            <person name="Gamo F.-J."/>
            <person name="Gancedo C."/>
            <person name="Goffeau A."/>
            <person name="Goulding S.E."/>
            <person name="Grivell L.A."/>
            <person name="Habbig B."/>
            <person name="Hand N.J."/>
            <person name="Hani J."/>
            <person name="Hattenhorst U."/>
            <person name="Hebling U."/>
            <person name="Hernando Y."/>
            <person name="Herrero E."/>
            <person name="Heumann K."/>
            <person name="Hiesel R."/>
            <person name="Hilger F."/>
            <person name="Hofmann B."/>
            <person name="Hollenberg C.P."/>
            <person name="Hughes B."/>
            <person name="Jauniaux J.-C."/>
            <person name="Kalogeropoulos A."/>
            <person name="Katsoulou C."/>
            <person name="Kordes E."/>
            <person name="Lafuente M.J."/>
            <person name="Landt O."/>
            <person name="Louis E.J."/>
            <person name="Maarse A.C."/>
            <person name="Madania A."/>
            <person name="Mannhaupt G."/>
            <person name="Marck C."/>
            <person name="Martin R.P."/>
            <person name="Mewes H.-W."/>
            <person name="Michaux G."/>
            <person name="Paces V."/>
            <person name="Parle-McDermott A.G."/>
            <person name="Pearson B.M."/>
            <person name="Perrin A."/>
            <person name="Pettersson B."/>
            <person name="Poch O."/>
            <person name="Pohl T.M."/>
            <person name="Poirey R."/>
            <person name="Portetelle D."/>
            <person name="Pujol A."/>
            <person name="Purnelle B."/>
            <person name="Ramezani Rad M."/>
            <person name="Rechmann S."/>
            <person name="Schwager C."/>
            <person name="Schweizer M."/>
            <person name="Sor F."/>
            <person name="Sterky F."/>
            <person name="Tarassov I.A."/>
            <person name="Teodoru C."/>
            <person name="Tettelin H."/>
            <person name="Thierry A."/>
            <person name="Tobiasch E."/>
            <person name="Tzermia M."/>
            <person name="Uhlen M."/>
            <person name="Unseld M."/>
            <person name="Valens M."/>
            <person name="Vandenbol M."/>
            <person name="Vetter I."/>
            <person name="Vlcek C."/>
            <person name="Voet M."/>
            <person name="Volckaert G."/>
            <person name="Voss H."/>
            <person name="Wambutt R."/>
            <person name="Wedler H."/>
            <person name="Wiemann S."/>
            <person name="Winsor B."/>
            <person name="Wolfe K.H."/>
            <person name="Zollner A."/>
            <person name="Zumstein E."/>
            <person name="Kleine K."/>
        </authorList>
    </citation>
    <scope>NUCLEOTIDE SEQUENCE [LARGE SCALE GENOMIC DNA]</scope>
    <source>
        <strain>ATCC 204508 / S288c</strain>
    </source>
</reference>
<reference key="2">
    <citation type="journal article" date="2014" name="G3 (Bethesda)">
        <title>The reference genome sequence of Saccharomyces cerevisiae: Then and now.</title>
        <authorList>
            <person name="Engel S.R."/>
            <person name="Dietrich F.S."/>
            <person name="Fisk D.G."/>
            <person name="Binkley G."/>
            <person name="Balakrishnan R."/>
            <person name="Costanzo M.C."/>
            <person name="Dwight S.S."/>
            <person name="Hitz B.C."/>
            <person name="Karra K."/>
            <person name="Nash R.S."/>
            <person name="Weng S."/>
            <person name="Wong E.D."/>
            <person name="Lloyd P."/>
            <person name="Skrzypek M.S."/>
            <person name="Miyasato S.R."/>
            <person name="Simison M."/>
            <person name="Cherry J.M."/>
        </authorList>
    </citation>
    <scope>GENOME REANNOTATION</scope>
    <source>
        <strain>ATCC 204508 / S288c</strain>
    </source>
</reference>
<reference key="3">
    <citation type="journal article" date="2002" name="Genome Res.">
        <title>Parallel identification of new genes in Saccharomyces cerevisiae.</title>
        <authorList>
            <person name="Oshiro G."/>
            <person name="Wodicka L.M."/>
            <person name="Washburn M.P."/>
            <person name="Yates J.R. III"/>
            <person name="Lockhart D.J."/>
            <person name="Winzeler E.A."/>
        </authorList>
    </citation>
    <scope>IDENTIFICATION BY MASS SPECTROMETRY</scope>
</reference>
<proteinExistence type="evidence at protein level"/>